<dbReference type="EC" id="2.1.3.3" evidence="2"/>
<dbReference type="EMBL" id="AE008917">
    <property type="protein sequence ID" value="AAL52801.1"/>
    <property type="status" value="ALT_INIT"/>
    <property type="molecule type" value="Genomic_DNA"/>
</dbReference>
<dbReference type="PIR" id="AF3454">
    <property type="entry name" value="AF3454"/>
</dbReference>
<dbReference type="RefSeq" id="WP_002963466.1">
    <property type="nucleotide sequence ID" value="NZ_GG703778.1"/>
</dbReference>
<dbReference type="SMR" id="Q8YFA2"/>
<dbReference type="GeneID" id="93017231"/>
<dbReference type="KEGG" id="bme:BMEI1620"/>
<dbReference type="KEGG" id="bmel:DK63_1871"/>
<dbReference type="PATRIC" id="fig|224914.52.peg.1970"/>
<dbReference type="eggNOG" id="COG0078">
    <property type="taxonomic scope" value="Bacteria"/>
</dbReference>
<dbReference type="PhylomeDB" id="Q8YFA2"/>
<dbReference type="UniPathway" id="UPA00068">
    <property type="reaction ID" value="UER00112"/>
</dbReference>
<dbReference type="Proteomes" id="UP000000419">
    <property type="component" value="Chromosome I"/>
</dbReference>
<dbReference type="GO" id="GO:0005737">
    <property type="term" value="C:cytoplasm"/>
    <property type="evidence" value="ECO:0007669"/>
    <property type="project" value="UniProtKB-SubCell"/>
</dbReference>
<dbReference type="GO" id="GO:0016597">
    <property type="term" value="F:amino acid binding"/>
    <property type="evidence" value="ECO:0007669"/>
    <property type="project" value="InterPro"/>
</dbReference>
<dbReference type="GO" id="GO:0004585">
    <property type="term" value="F:ornithine carbamoyltransferase activity"/>
    <property type="evidence" value="ECO:0007669"/>
    <property type="project" value="UniProtKB-UniRule"/>
</dbReference>
<dbReference type="GO" id="GO:0042450">
    <property type="term" value="P:arginine biosynthetic process via ornithine"/>
    <property type="evidence" value="ECO:0007669"/>
    <property type="project" value="TreeGrafter"/>
</dbReference>
<dbReference type="GO" id="GO:0019240">
    <property type="term" value="P:citrulline biosynthetic process"/>
    <property type="evidence" value="ECO:0007669"/>
    <property type="project" value="TreeGrafter"/>
</dbReference>
<dbReference type="GO" id="GO:0006526">
    <property type="term" value="P:L-arginine biosynthetic process"/>
    <property type="evidence" value="ECO:0007669"/>
    <property type="project" value="UniProtKB-UniRule"/>
</dbReference>
<dbReference type="FunFam" id="3.40.50.1370:FF:000008">
    <property type="entry name" value="Ornithine carbamoyltransferase"/>
    <property type="match status" value="1"/>
</dbReference>
<dbReference type="FunFam" id="3.40.50.1370:FF:000016">
    <property type="entry name" value="Ornithine carbamoyltransferase"/>
    <property type="match status" value="1"/>
</dbReference>
<dbReference type="Gene3D" id="3.40.50.1370">
    <property type="entry name" value="Aspartate/ornithine carbamoyltransferase"/>
    <property type="match status" value="2"/>
</dbReference>
<dbReference type="HAMAP" id="MF_01109">
    <property type="entry name" value="OTCase"/>
    <property type="match status" value="1"/>
</dbReference>
<dbReference type="InterPro" id="IPR006132">
    <property type="entry name" value="Asp/Orn_carbamoyltranf_P-bd"/>
</dbReference>
<dbReference type="InterPro" id="IPR006130">
    <property type="entry name" value="Asp/Orn_carbamoylTrfase"/>
</dbReference>
<dbReference type="InterPro" id="IPR036901">
    <property type="entry name" value="Asp/Orn_carbamoylTrfase_sf"/>
</dbReference>
<dbReference type="InterPro" id="IPR006131">
    <property type="entry name" value="Asp_carbamoyltransf_Asp/Orn-bd"/>
</dbReference>
<dbReference type="InterPro" id="IPR002292">
    <property type="entry name" value="Orn/put_carbamltrans"/>
</dbReference>
<dbReference type="InterPro" id="IPR024904">
    <property type="entry name" value="OTCase_ArgI"/>
</dbReference>
<dbReference type="NCBIfam" id="TIGR00658">
    <property type="entry name" value="orni_carb_tr"/>
    <property type="match status" value="1"/>
</dbReference>
<dbReference type="NCBIfam" id="NF001986">
    <property type="entry name" value="PRK00779.1"/>
    <property type="match status" value="1"/>
</dbReference>
<dbReference type="PANTHER" id="PTHR45753">
    <property type="entry name" value="ORNITHINE CARBAMOYLTRANSFERASE, MITOCHONDRIAL"/>
    <property type="match status" value="1"/>
</dbReference>
<dbReference type="PANTHER" id="PTHR45753:SF3">
    <property type="entry name" value="ORNITHINE TRANSCARBAMYLASE, MITOCHONDRIAL"/>
    <property type="match status" value="1"/>
</dbReference>
<dbReference type="Pfam" id="PF00185">
    <property type="entry name" value="OTCace"/>
    <property type="match status" value="1"/>
</dbReference>
<dbReference type="Pfam" id="PF02729">
    <property type="entry name" value="OTCace_N"/>
    <property type="match status" value="1"/>
</dbReference>
<dbReference type="PRINTS" id="PR00100">
    <property type="entry name" value="AOTCASE"/>
</dbReference>
<dbReference type="PRINTS" id="PR00102">
    <property type="entry name" value="OTCASE"/>
</dbReference>
<dbReference type="SUPFAM" id="SSF53671">
    <property type="entry name" value="Aspartate/ornithine carbamoyltransferase"/>
    <property type="match status" value="1"/>
</dbReference>
<dbReference type="PROSITE" id="PS00097">
    <property type="entry name" value="CARBAMOYLTRANSFERASE"/>
    <property type="match status" value="1"/>
</dbReference>
<sequence length="312" mass="34239">MANDNGIKHFIDLSTVPATELRAILEDAKARKARLKAGEVERPYAGKVLAMIFEKLSTRTRVSFDVGMRQLGGETIMLTGSEMQLGRSETIADTAKVLSRYVDAIMIRTTAHERMLELAEYATVPVINALTDDTHPCQIMADVLTYEEHRGPIKGKTFAWMGDGNNVLHSLVEAAARFDFNVNIATPKGSEPKSQYIDWARANGAGIMSTTDPEKAASGADCIVTDTWVSMGQEDHARGHNVFIPYQVNANLMAKADPKALFMHCLPAHRGEEVTDEVIDGPQSVVFDEAENRLHAQKAILAWCLQDRGLGA</sequence>
<organism>
    <name type="scientific">Brucella melitensis biotype 1 (strain ATCC 23456 / CCUG 17765 / NCTC 10094 / 16M)</name>
    <dbReference type="NCBI Taxonomy" id="224914"/>
    <lineage>
        <taxon>Bacteria</taxon>
        <taxon>Pseudomonadati</taxon>
        <taxon>Pseudomonadota</taxon>
        <taxon>Alphaproteobacteria</taxon>
        <taxon>Hyphomicrobiales</taxon>
        <taxon>Brucellaceae</taxon>
        <taxon>Brucella/Ochrobactrum group</taxon>
        <taxon>Brucella</taxon>
    </lineage>
</organism>
<protein>
    <recommendedName>
        <fullName evidence="2">Ornithine carbamoyltransferase</fullName>
        <shortName evidence="2">OTCase</shortName>
        <ecNumber evidence="2">2.1.3.3</ecNumber>
    </recommendedName>
</protein>
<name>OTC_BRUME</name>
<keyword id="KW-0028">Amino-acid biosynthesis</keyword>
<keyword id="KW-0055">Arginine biosynthesis</keyword>
<keyword id="KW-0963">Cytoplasm</keyword>
<keyword id="KW-0808">Transferase</keyword>
<reference key="1">
    <citation type="journal article" date="2002" name="Proc. Natl. Acad. Sci. U.S.A.">
        <title>The genome sequence of the facultative intracellular pathogen Brucella melitensis.</title>
        <authorList>
            <person name="DelVecchio V.G."/>
            <person name="Kapatral V."/>
            <person name="Redkar R.J."/>
            <person name="Patra G."/>
            <person name="Mujer C."/>
            <person name="Los T."/>
            <person name="Ivanova N."/>
            <person name="Anderson I."/>
            <person name="Bhattacharyya A."/>
            <person name="Lykidis A."/>
            <person name="Reznik G."/>
            <person name="Jablonski L."/>
            <person name="Larsen N."/>
            <person name="D'Souza M."/>
            <person name="Bernal A."/>
            <person name="Mazur M."/>
            <person name="Goltsman E."/>
            <person name="Selkov E."/>
            <person name="Elzer P.H."/>
            <person name="Hagius S."/>
            <person name="O'Callaghan D."/>
            <person name="Letesson J.-J."/>
            <person name="Haselkorn R."/>
            <person name="Kyrpides N.C."/>
            <person name="Overbeek R."/>
        </authorList>
    </citation>
    <scope>NUCLEOTIDE SEQUENCE [LARGE SCALE GENOMIC DNA]</scope>
    <source>
        <strain>ATCC 23456 / CCUG 17765 / NCTC 10094 / 16M</strain>
    </source>
</reference>
<evidence type="ECO:0000250" key="1"/>
<evidence type="ECO:0000255" key="2">
    <source>
        <dbReference type="HAMAP-Rule" id="MF_01109"/>
    </source>
</evidence>
<evidence type="ECO:0000305" key="3"/>
<accession>Q8YFA2</accession>
<comment type="function">
    <text evidence="1">Reversibly catalyzes the transfer of the carbamoyl group from carbamoyl phosphate (CP) to the N(epsilon) atom of ornithine (ORN) to produce L-citrulline.</text>
</comment>
<comment type="catalytic activity">
    <reaction evidence="2">
        <text>carbamoyl phosphate + L-ornithine = L-citrulline + phosphate + H(+)</text>
        <dbReference type="Rhea" id="RHEA:19513"/>
        <dbReference type="ChEBI" id="CHEBI:15378"/>
        <dbReference type="ChEBI" id="CHEBI:43474"/>
        <dbReference type="ChEBI" id="CHEBI:46911"/>
        <dbReference type="ChEBI" id="CHEBI:57743"/>
        <dbReference type="ChEBI" id="CHEBI:58228"/>
        <dbReference type="EC" id="2.1.3.3"/>
    </reaction>
</comment>
<comment type="pathway">
    <text evidence="2">Amino-acid biosynthesis; L-arginine biosynthesis; L-arginine from L-ornithine and carbamoyl phosphate: step 1/3.</text>
</comment>
<comment type="subcellular location">
    <subcellularLocation>
        <location evidence="2">Cytoplasm</location>
    </subcellularLocation>
</comment>
<comment type="similarity">
    <text evidence="2">Belongs to the aspartate/ornithine carbamoyltransferase superfamily. OTCase family.</text>
</comment>
<comment type="sequence caution" evidence="3">
    <conflict type="erroneous initiation">
        <sequence resource="EMBL-CDS" id="AAL52801"/>
    </conflict>
</comment>
<gene>
    <name evidence="2" type="primary">argF</name>
    <name type="ordered locus">BMEI1620</name>
</gene>
<proteinExistence type="inferred from homology"/>
<feature type="chain" id="PRO_0000112895" description="Ornithine carbamoyltransferase">
    <location>
        <begin position="1"/>
        <end position="312"/>
    </location>
</feature>
<feature type="binding site" evidence="2">
    <location>
        <begin position="57"/>
        <end position="60"/>
    </location>
    <ligand>
        <name>carbamoyl phosphate</name>
        <dbReference type="ChEBI" id="CHEBI:58228"/>
    </ligand>
</feature>
<feature type="binding site" evidence="2">
    <location>
        <position position="84"/>
    </location>
    <ligand>
        <name>carbamoyl phosphate</name>
        <dbReference type="ChEBI" id="CHEBI:58228"/>
    </ligand>
</feature>
<feature type="binding site" evidence="2">
    <location>
        <position position="108"/>
    </location>
    <ligand>
        <name>carbamoyl phosphate</name>
        <dbReference type="ChEBI" id="CHEBI:58228"/>
    </ligand>
</feature>
<feature type="binding site" evidence="2">
    <location>
        <begin position="135"/>
        <end position="138"/>
    </location>
    <ligand>
        <name>carbamoyl phosphate</name>
        <dbReference type="ChEBI" id="CHEBI:58228"/>
    </ligand>
</feature>
<feature type="binding site" evidence="2">
    <location>
        <position position="166"/>
    </location>
    <ligand>
        <name>L-ornithine</name>
        <dbReference type="ChEBI" id="CHEBI:46911"/>
    </ligand>
</feature>
<feature type="binding site" evidence="2">
    <location>
        <position position="226"/>
    </location>
    <ligand>
        <name>L-ornithine</name>
        <dbReference type="ChEBI" id="CHEBI:46911"/>
    </ligand>
</feature>
<feature type="binding site" evidence="2">
    <location>
        <begin position="230"/>
        <end position="231"/>
    </location>
    <ligand>
        <name>L-ornithine</name>
        <dbReference type="ChEBI" id="CHEBI:46911"/>
    </ligand>
</feature>
<feature type="binding site" evidence="2">
    <location>
        <begin position="265"/>
        <end position="266"/>
    </location>
    <ligand>
        <name>carbamoyl phosphate</name>
        <dbReference type="ChEBI" id="CHEBI:58228"/>
    </ligand>
</feature>
<feature type="binding site" evidence="2">
    <location>
        <position position="293"/>
    </location>
    <ligand>
        <name>carbamoyl phosphate</name>
        <dbReference type="ChEBI" id="CHEBI:58228"/>
    </ligand>
</feature>